<proteinExistence type="inferred from homology"/>
<feature type="chain" id="PRO_1000165323" description="Small ribosomal subunit protein uS8">
    <location>
        <begin position="1"/>
        <end position="133"/>
    </location>
</feature>
<comment type="function">
    <text evidence="1">One of the primary rRNA binding proteins, it binds directly to 16S rRNA central domain where it helps coordinate assembly of the platform of the 30S subunit.</text>
</comment>
<comment type="subunit">
    <text evidence="1">Part of the 30S ribosomal subunit. Contacts proteins S5 and S12.</text>
</comment>
<comment type="similarity">
    <text evidence="1">Belongs to the universal ribosomal protein uS8 family.</text>
</comment>
<organism>
    <name type="scientific">Crocosphaera subtropica (strain ATCC 51142 / BH68)</name>
    <name type="common">Cyanothece sp. (strain ATCC 51142)</name>
    <dbReference type="NCBI Taxonomy" id="43989"/>
    <lineage>
        <taxon>Bacteria</taxon>
        <taxon>Bacillati</taxon>
        <taxon>Cyanobacteriota</taxon>
        <taxon>Cyanophyceae</taxon>
        <taxon>Oscillatoriophycideae</taxon>
        <taxon>Chroococcales</taxon>
        <taxon>Aphanothecaceae</taxon>
        <taxon>Crocosphaera</taxon>
        <taxon>Crocosphaera subtropica</taxon>
    </lineage>
</organism>
<reference key="1">
    <citation type="journal article" date="2008" name="Proc. Natl. Acad. Sci. U.S.A.">
        <title>The genome of Cyanothece 51142, a unicellular diazotrophic cyanobacterium important in the marine nitrogen cycle.</title>
        <authorList>
            <person name="Welsh E.A."/>
            <person name="Liberton M."/>
            <person name="Stoeckel J."/>
            <person name="Loh T."/>
            <person name="Elvitigala T."/>
            <person name="Wang C."/>
            <person name="Wollam A."/>
            <person name="Fulton R.S."/>
            <person name="Clifton S.W."/>
            <person name="Jacobs J.M."/>
            <person name="Aurora R."/>
            <person name="Ghosh B.K."/>
            <person name="Sherman L.A."/>
            <person name="Smith R.D."/>
            <person name="Wilson R.K."/>
            <person name="Pakrasi H.B."/>
        </authorList>
    </citation>
    <scope>NUCLEOTIDE SEQUENCE [LARGE SCALE GENOMIC DNA]</scope>
    <source>
        <strain>ATCC 51142 / BH68</strain>
    </source>
</reference>
<sequence>MAPNDIISDMLTRIRNACAVRHPTTVVPTTKMTRSIAQVLKEEGFIEGFEEVGEGVKKHLVISLKYKSRGRQPIINTLQRVSKPGLRVYSNRKDLPRVLGGIGIAIISTSKGIMTDREARRQNVGGEVLCYVW</sequence>
<evidence type="ECO:0000255" key="1">
    <source>
        <dbReference type="HAMAP-Rule" id="MF_01302"/>
    </source>
</evidence>
<evidence type="ECO:0000305" key="2"/>
<protein>
    <recommendedName>
        <fullName evidence="1">Small ribosomal subunit protein uS8</fullName>
    </recommendedName>
    <alternativeName>
        <fullName evidence="2">30S ribosomal protein S8</fullName>
    </alternativeName>
</protein>
<name>RS8_CROS5</name>
<keyword id="KW-1185">Reference proteome</keyword>
<keyword id="KW-0687">Ribonucleoprotein</keyword>
<keyword id="KW-0689">Ribosomal protein</keyword>
<keyword id="KW-0694">RNA-binding</keyword>
<keyword id="KW-0699">rRNA-binding</keyword>
<gene>
    <name evidence="1" type="primary">rpsH</name>
    <name evidence="1" type="synonym">rps8</name>
    <name type="ordered locus">cce_4028</name>
</gene>
<dbReference type="EMBL" id="CP000806">
    <property type="protein sequence ID" value="ACB53376.1"/>
    <property type="molecule type" value="Genomic_DNA"/>
</dbReference>
<dbReference type="RefSeq" id="WP_009543884.1">
    <property type="nucleotide sequence ID" value="NC_010546.1"/>
</dbReference>
<dbReference type="SMR" id="B1WQS4"/>
<dbReference type="STRING" id="43989.cce_4028"/>
<dbReference type="KEGG" id="cyt:cce_4028"/>
<dbReference type="eggNOG" id="COG0096">
    <property type="taxonomic scope" value="Bacteria"/>
</dbReference>
<dbReference type="HOGENOM" id="CLU_098428_0_2_3"/>
<dbReference type="OrthoDB" id="9802617at2"/>
<dbReference type="Proteomes" id="UP000001203">
    <property type="component" value="Chromosome circular"/>
</dbReference>
<dbReference type="GO" id="GO:1990904">
    <property type="term" value="C:ribonucleoprotein complex"/>
    <property type="evidence" value="ECO:0007669"/>
    <property type="project" value="UniProtKB-KW"/>
</dbReference>
<dbReference type="GO" id="GO:0005840">
    <property type="term" value="C:ribosome"/>
    <property type="evidence" value="ECO:0007669"/>
    <property type="project" value="UniProtKB-KW"/>
</dbReference>
<dbReference type="GO" id="GO:0019843">
    <property type="term" value="F:rRNA binding"/>
    <property type="evidence" value="ECO:0007669"/>
    <property type="project" value="UniProtKB-UniRule"/>
</dbReference>
<dbReference type="GO" id="GO:0003735">
    <property type="term" value="F:structural constituent of ribosome"/>
    <property type="evidence" value="ECO:0007669"/>
    <property type="project" value="InterPro"/>
</dbReference>
<dbReference type="GO" id="GO:0006412">
    <property type="term" value="P:translation"/>
    <property type="evidence" value="ECO:0007669"/>
    <property type="project" value="UniProtKB-UniRule"/>
</dbReference>
<dbReference type="FunFam" id="3.30.1370.30:FF:000002">
    <property type="entry name" value="30S ribosomal protein S8"/>
    <property type="match status" value="1"/>
</dbReference>
<dbReference type="FunFam" id="3.30.1490.10:FF:000001">
    <property type="entry name" value="30S ribosomal protein S8"/>
    <property type="match status" value="1"/>
</dbReference>
<dbReference type="Gene3D" id="3.30.1370.30">
    <property type="match status" value="1"/>
</dbReference>
<dbReference type="Gene3D" id="3.30.1490.10">
    <property type="match status" value="1"/>
</dbReference>
<dbReference type="HAMAP" id="MF_01302_B">
    <property type="entry name" value="Ribosomal_uS8_B"/>
    <property type="match status" value="1"/>
</dbReference>
<dbReference type="InterPro" id="IPR000630">
    <property type="entry name" value="Ribosomal_uS8"/>
</dbReference>
<dbReference type="InterPro" id="IPR047863">
    <property type="entry name" value="Ribosomal_uS8_CS"/>
</dbReference>
<dbReference type="InterPro" id="IPR035987">
    <property type="entry name" value="Ribosomal_uS8_sf"/>
</dbReference>
<dbReference type="NCBIfam" id="NF001109">
    <property type="entry name" value="PRK00136.1"/>
    <property type="match status" value="1"/>
</dbReference>
<dbReference type="PANTHER" id="PTHR11758">
    <property type="entry name" value="40S RIBOSOMAL PROTEIN S15A"/>
    <property type="match status" value="1"/>
</dbReference>
<dbReference type="Pfam" id="PF00410">
    <property type="entry name" value="Ribosomal_S8"/>
    <property type="match status" value="1"/>
</dbReference>
<dbReference type="SUPFAM" id="SSF56047">
    <property type="entry name" value="Ribosomal protein S8"/>
    <property type="match status" value="1"/>
</dbReference>
<dbReference type="PROSITE" id="PS00053">
    <property type="entry name" value="RIBOSOMAL_S8"/>
    <property type="match status" value="1"/>
</dbReference>
<accession>B1WQS4</accession>